<gene>
    <name evidence="1" type="primary">miaB</name>
    <name type="ordered locus">RC1_2978</name>
</gene>
<feature type="chain" id="PRO_0000374499" description="tRNA-2-methylthio-N(6)-dimethylallyladenosine synthase">
    <location>
        <begin position="1"/>
        <end position="466"/>
    </location>
</feature>
<feature type="domain" description="MTTase N-terminal" evidence="1">
    <location>
        <begin position="3"/>
        <end position="123"/>
    </location>
</feature>
<feature type="domain" description="Radical SAM core" evidence="2">
    <location>
        <begin position="148"/>
        <end position="381"/>
    </location>
</feature>
<feature type="domain" description="TRAM" evidence="1">
    <location>
        <begin position="384"/>
        <end position="446"/>
    </location>
</feature>
<feature type="binding site" evidence="1">
    <location>
        <position position="12"/>
    </location>
    <ligand>
        <name>[4Fe-4S] cluster</name>
        <dbReference type="ChEBI" id="CHEBI:49883"/>
        <label>1</label>
    </ligand>
</feature>
<feature type="binding site" evidence="1">
    <location>
        <position position="48"/>
    </location>
    <ligand>
        <name>[4Fe-4S] cluster</name>
        <dbReference type="ChEBI" id="CHEBI:49883"/>
        <label>1</label>
    </ligand>
</feature>
<feature type="binding site" evidence="1">
    <location>
        <position position="86"/>
    </location>
    <ligand>
        <name>[4Fe-4S] cluster</name>
        <dbReference type="ChEBI" id="CHEBI:49883"/>
        <label>1</label>
    </ligand>
</feature>
<feature type="binding site" evidence="1">
    <location>
        <position position="162"/>
    </location>
    <ligand>
        <name>[4Fe-4S] cluster</name>
        <dbReference type="ChEBI" id="CHEBI:49883"/>
        <label>2</label>
        <note>4Fe-4S-S-AdoMet</note>
    </ligand>
</feature>
<feature type="binding site" evidence="1">
    <location>
        <position position="166"/>
    </location>
    <ligand>
        <name>[4Fe-4S] cluster</name>
        <dbReference type="ChEBI" id="CHEBI:49883"/>
        <label>2</label>
        <note>4Fe-4S-S-AdoMet</note>
    </ligand>
</feature>
<feature type="binding site" evidence="1">
    <location>
        <position position="169"/>
    </location>
    <ligand>
        <name>[4Fe-4S] cluster</name>
        <dbReference type="ChEBI" id="CHEBI:49883"/>
        <label>2</label>
        <note>4Fe-4S-S-AdoMet</note>
    </ligand>
</feature>
<sequence>MKKKLYIKTYGCQMNVYDSGRMADVLAPLGYEPTDAPDGADMVILNTCHIREKAAEKVYSDLGRLRPLQAARAATGGRMIVAVGGCVAQAEGAEIMMRAPHVDMVFGPQTYHQLPEMVARAVRGTGGVVNTDFPVESKFDSLPEEGASPAGPSAFLSVQEGCDKFCTYCVVPYTRGAEFSRPAARVLAEAARLVADGVAEITLLGQNVNAYHGDGPDGTTWGLGRLVRNLAEIDGLARIRYTTSHPNDMDAELIAAHAEVPQLMPFVHLPVQSGNDRILQAMNRKHTADDYRRVVERMRAARPDLALSSDFIVGFPGETDQEFADTLRLVTEIGYAQAYSFKYSARPGTPAAAMDGRQVPESVKAERLEALQQLLTAQQTAFNTACVGRVQPVLFDRRGKKPGQLLGRGPWMQAVHAEAPERLLGRIVEVRIADAHANSLSGTVVVGEHVHAHPVAPETASAEAGV</sequence>
<name>MIAB_RHOCS</name>
<proteinExistence type="inferred from homology"/>
<dbReference type="EC" id="2.8.4.3" evidence="1"/>
<dbReference type="EMBL" id="CP000613">
    <property type="protein sequence ID" value="ACJ00346.1"/>
    <property type="molecule type" value="Genomic_DNA"/>
</dbReference>
<dbReference type="RefSeq" id="WP_012568126.1">
    <property type="nucleotide sequence ID" value="NC_011420.2"/>
</dbReference>
<dbReference type="SMR" id="B6IVM2"/>
<dbReference type="STRING" id="414684.RC1_2978"/>
<dbReference type="KEGG" id="rce:RC1_2978"/>
<dbReference type="eggNOG" id="COG0621">
    <property type="taxonomic scope" value="Bacteria"/>
</dbReference>
<dbReference type="HOGENOM" id="CLU_018697_2_0_5"/>
<dbReference type="OrthoDB" id="9805215at2"/>
<dbReference type="Proteomes" id="UP000001591">
    <property type="component" value="Chromosome"/>
</dbReference>
<dbReference type="GO" id="GO:0005829">
    <property type="term" value="C:cytosol"/>
    <property type="evidence" value="ECO:0007669"/>
    <property type="project" value="TreeGrafter"/>
</dbReference>
<dbReference type="GO" id="GO:0051539">
    <property type="term" value="F:4 iron, 4 sulfur cluster binding"/>
    <property type="evidence" value="ECO:0007669"/>
    <property type="project" value="UniProtKB-UniRule"/>
</dbReference>
<dbReference type="GO" id="GO:0046872">
    <property type="term" value="F:metal ion binding"/>
    <property type="evidence" value="ECO:0007669"/>
    <property type="project" value="UniProtKB-KW"/>
</dbReference>
<dbReference type="GO" id="GO:0035597">
    <property type="term" value="F:N6-isopentenyladenosine methylthiotransferase activity"/>
    <property type="evidence" value="ECO:0007669"/>
    <property type="project" value="TreeGrafter"/>
</dbReference>
<dbReference type="CDD" id="cd01335">
    <property type="entry name" value="Radical_SAM"/>
    <property type="match status" value="1"/>
</dbReference>
<dbReference type="FunFam" id="3.40.50.12160:FF:000001">
    <property type="entry name" value="tRNA-2-methylthio-N(6)-dimethylallyladenosine synthase"/>
    <property type="match status" value="1"/>
</dbReference>
<dbReference type="FunFam" id="3.80.30.20:FF:000001">
    <property type="entry name" value="tRNA-2-methylthio-N(6)-dimethylallyladenosine synthase 2"/>
    <property type="match status" value="1"/>
</dbReference>
<dbReference type="Gene3D" id="3.40.50.12160">
    <property type="entry name" value="Methylthiotransferase, N-terminal domain"/>
    <property type="match status" value="1"/>
</dbReference>
<dbReference type="Gene3D" id="3.80.30.20">
    <property type="entry name" value="tm_1862 like domain"/>
    <property type="match status" value="1"/>
</dbReference>
<dbReference type="HAMAP" id="MF_01864">
    <property type="entry name" value="tRNA_metthiotr_MiaB"/>
    <property type="match status" value="1"/>
</dbReference>
<dbReference type="InterPro" id="IPR006638">
    <property type="entry name" value="Elp3/MiaA/NifB-like_rSAM"/>
</dbReference>
<dbReference type="InterPro" id="IPR005839">
    <property type="entry name" value="Methylthiotransferase"/>
</dbReference>
<dbReference type="InterPro" id="IPR020612">
    <property type="entry name" value="Methylthiotransferase_CS"/>
</dbReference>
<dbReference type="InterPro" id="IPR013848">
    <property type="entry name" value="Methylthiotransferase_N"/>
</dbReference>
<dbReference type="InterPro" id="IPR038135">
    <property type="entry name" value="Methylthiotransferase_N_sf"/>
</dbReference>
<dbReference type="InterPro" id="IPR006463">
    <property type="entry name" value="MiaB_methiolase"/>
</dbReference>
<dbReference type="InterPro" id="IPR007197">
    <property type="entry name" value="rSAM"/>
</dbReference>
<dbReference type="InterPro" id="IPR023404">
    <property type="entry name" value="rSAM_horseshoe"/>
</dbReference>
<dbReference type="InterPro" id="IPR002792">
    <property type="entry name" value="TRAM_dom"/>
</dbReference>
<dbReference type="NCBIfam" id="TIGR01574">
    <property type="entry name" value="miaB-methiolase"/>
    <property type="match status" value="1"/>
</dbReference>
<dbReference type="NCBIfam" id="TIGR00089">
    <property type="entry name" value="MiaB/RimO family radical SAM methylthiotransferase"/>
    <property type="match status" value="1"/>
</dbReference>
<dbReference type="PANTHER" id="PTHR43020">
    <property type="entry name" value="CDK5 REGULATORY SUBUNIT-ASSOCIATED PROTEIN 1"/>
    <property type="match status" value="1"/>
</dbReference>
<dbReference type="PANTHER" id="PTHR43020:SF2">
    <property type="entry name" value="MITOCHONDRIAL TRNA METHYLTHIOTRANSFERASE CDK5RAP1"/>
    <property type="match status" value="1"/>
</dbReference>
<dbReference type="Pfam" id="PF04055">
    <property type="entry name" value="Radical_SAM"/>
    <property type="match status" value="1"/>
</dbReference>
<dbReference type="Pfam" id="PF01938">
    <property type="entry name" value="TRAM"/>
    <property type="match status" value="1"/>
</dbReference>
<dbReference type="Pfam" id="PF00919">
    <property type="entry name" value="UPF0004"/>
    <property type="match status" value="1"/>
</dbReference>
<dbReference type="SFLD" id="SFLDF00273">
    <property type="entry name" value="(dimethylallyl)adenosine_tRNA"/>
    <property type="match status" value="1"/>
</dbReference>
<dbReference type="SFLD" id="SFLDG01082">
    <property type="entry name" value="B12-binding_domain_containing"/>
    <property type="match status" value="1"/>
</dbReference>
<dbReference type="SFLD" id="SFLDS00029">
    <property type="entry name" value="Radical_SAM"/>
    <property type="match status" value="1"/>
</dbReference>
<dbReference type="SMART" id="SM00729">
    <property type="entry name" value="Elp3"/>
    <property type="match status" value="1"/>
</dbReference>
<dbReference type="SUPFAM" id="SSF102114">
    <property type="entry name" value="Radical SAM enzymes"/>
    <property type="match status" value="1"/>
</dbReference>
<dbReference type="PROSITE" id="PS51449">
    <property type="entry name" value="MTTASE_N"/>
    <property type="match status" value="1"/>
</dbReference>
<dbReference type="PROSITE" id="PS01278">
    <property type="entry name" value="MTTASE_RADICAL"/>
    <property type="match status" value="1"/>
</dbReference>
<dbReference type="PROSITE" id="PS51918">
    <property type="entry name" value="RADICAL_SAM"/>
    <property type="match status" value="1"/>
</dbReference>
<dbReference type="PROSITE" id="PS50926">
    <property type="entry name" value="TRAM"/>
    <property type="match status" value="1"/>
</dbReference>
<reference key="1">
    <citation type="submission" date="2007-03" db="EMBL/GenBank/DDBJ databases">
        <title>Genome sequence of Rhodospirillum centenum.</title>
        <authorList>
            <person name="Touchman J.W."/>
            <person name="Bauer C."/>
            <person name="Blankenship R.E."/>
        </authorList>
    </citation>
    <scope>NUCLEOTIDE SEQUENCE [LARGE SCALE GENOMIC DNA]</scope>
    <source>
        <strain>ATCC 51521 / SW</strain>
    </source>
</reference>
<keyword id="KW-0004">4Fe-4S</keyword>
<keyword id="KW-0963">Cytoplasm</keyword>
<keyword id="KW-0408">Iron</keyword>
<keyword id="KW-0411">Iron-sulfur</keyword>
<keyword id="KW-0479">Metal-binding</keyword>
<keyword id="KW-1185">Reference proteome</keyword>
<keyword id="KW-0949">S-adenosyl-L-methionine</keyword>
<keyword id="KW-0808">Transferase</keyword>
<keyword id="KW-0819">tRNA processing</keyword>
<protein>
    <recommendedName>
        <fullName evidence="1">tRNA-2-methylthio-N(6)-dimethylallyladenosine synthase</fullName>
        <ecNumber evidence="1">2.8.4.3</ecNumber>
    </recommendedName>
    <alternativeName>
        <fullName evidence="1">(Dimethylallyl)adenosine tRNA methylthiotransferase MiaB</fullName>
    </alternativeName>
    <alternativeName>
        <fullName evidence="1">tRNA-i(6)A37 methylthiotransferase</fullName>
    </alternativeName>
</protein>
<evidence type="ECO:0000255" key="1">
    <source>
        <dbReference type="HAMAP-Rule" id="MF_01864"/>
    </source>
</evidence>
<evidence type="ECO:0000255" key="2">
    <source>
        <dbReference type="PROSITE-ProRule" id="PRU01266"/>
    </source>
</evidence>
<comment type="function">
    <text evidence="1">Catalyzes the methylthiolation of N6-(dimethylallyl)adenosine (i(6)A), leading to the formation of 2-methylthio-N6-(dimethylallyl)adenosine (ms(2)i(6)A) at position 37 in tRNAs that read codons beginning with uridine.</text>
</comment>
<comment type="catalytic activity">
    <reaction evidence="1">
        <text>N(6)-dimethylallyladenosine(37) in tRNA + (sulfur carrier)-SH + AH2 + 2 S-adenosyl-L-methionine = 2-methylsulfanyl-N(6)-dimethylallyladenosine(37) in tRNA + (sulfur carrier)-H + 5'-deoxyadenosine + L-methionine + A + S-adenosyl-L-homocysteine + 2 H(+)</text>
        <dbReference type="Rhea" id="RHEA:37067"/>
        <dbReference type="Rhea" id="RHEA-COMP:10375"/>
        <dbReference type="Rhea" id="RHEA-COMP:10376"/>
        <dbReference type="Rhea" id="RHEA-COMP:14737"/>
        <dbReference type="Rhea" id="RHEA-COMP:14739"/>
        <dbReference type="ChEBI" id="CHEBI:13193"/>
        <dbReference type="ChEBI" id="CHEBI:15378"/>
        <dbReference type="ChEBI" id="CHEBI:17319"/>
        <dbReference type="ChEBI" id="CHEBI:17499"/>
        <dbReference type="ChEBI" id="CHEBI:29917"/>
        <dbReference type="ChEBI" id="CHEBI:57844"/>
        <dbReference type="ChEBI" id="CHEBI:57856"/>
        <dbReference type="ChEBI" id="CHEBI:59789"/>
        <dbReference type="ChEBI" id="CHEBI:64428"/>
        <dbReference type="ChEBI" id="CHEBI:74415"/>
        <dbReference type="ChEBI" id="CHEBI:74417"/>
        <dbReference type="EC" id="2.8.4.3"/>
    </reaction>
</comment>
<comment type="cofactor">
    <cofactor evidence="1">
        <name>[4Fe-4S] cluster</name>
        <dbReference type="ChEBI" id="CHEBI:49883"/>
    </cofactor>
    <text evidence="1">Binds 2 [4Fe-4S] clusters. One cluster is coordinated with 3 cysteines and an exchangeable S-adenosyl-L-methionine.</text>
</comment>
<comment type="subunit">
    <text evidence="1">Monomer.</text>
</comment>
<comment type="subcellular location">
    <subcellularLocation>
        <location evidence="1">Cytoplasm</location>
    </subcellularLocation>
</comment>
<comment type="similarity">
    <text evidence="1">Belongs to the methylthiotransferase family. MiaB subfamily.</text>
</comment>
<accession>B6IVM2</accession>
<organism>
    <name type="scientific">Rhodospirillum centenum (strain ATCC 51521 / SW)</name>
    <dbReference type="NCBI Taxonomy" id="414684"/>
    <lineage>
        <taxon>Bacteria</taxon>
        <taxon>Pseudomonadati</taxon>
        <taxon>Pseudomonadota</taxon>
        <taxon>Alphaproteobacteria</taxon>
        <taxon>Rhodospirillales</taxon>
        <taxon>Rhodospirillaceae</taxon>
        <taxon>Rhodospirillum</taxon>
    </lineage>
</organism>